<organism>
    <name type="scientific">Aeromonas salmonicida (strain A449)</name>
    <dbReference type="NCBI Taxonomy" id="382245"/>
    <lineage>
        <taxon>Bacteria</taxon>
        <taxon>Pseudomonadati</taxon>
        <taxon>Pseudomonadota</taxon>
        <taxon>Gammaproteobacteria</taxon>
        <taxon>Aeromonadales</taxon>
        <taxon>Aeromonadaceae</taxon>
        <taxon>Aeromonas</taxon>
    </lineage>
</organism>
<keyword id="KW-0963">Cytoplasm</keyword>
<keyword id="KW-0489">Methyltransferase</keyword>
<keyword id="KW-0698">rRNA processing</keyword>
<keyword id="KW-0949">S-adenosyl-L-methionine</keyword>
<keyword id="KW-0808">Transferase</keyword>
<sequence length="249" mass="27068">MQILLEDPTKAAQAQVLASQLNQTDYPQFALVFTPERLELRKLDEPKLGAVYVDFVEGAVAHRRKFGGGRGQSIAKAVGLKAGAMPTVVDATAGLGRDAFVLASLGCKVTLIERSPVVAALLQDGLMRAAQDPEIGPWVSERMRLLQGPAVDNLLALPERPDVIYLDPMFPHKQKSALVKKEMRVFQSLVGPDLDADALLPAALQMADKRVVVKRPDYAGWLNEHKPSMAIETKSNRFDVYVMAALAAG</sequence>
<accession>A4STK0</accession>
<proteinExistence type="inferred from homology"/>
<evidence type="ECO:0000255" key="1">
    <source>
        <dbReference type="HAMAP-Rule" id="MF_01523"/>
    </source>
</evidence>
<protein>
    <recommendedName>
        <fullName evidence="1">Ribosomal RNA small subunit methyltransferase J</fullName>
        <ecNumber evidence="1">2.1.1.242</ecNumber>
    </recommendedName>
    <alternativeName>
        <fullName evidence="1">16S rRNA m2G1516 methyltransferase</fullName>
    </alternativeName>
    <alternativeName>
        <fullName evidence="1">rRNA (guanine-N(2)-)-methyltransferase</fullName>
    </alternativeName>
</protein>
<gene>
    <name evidence="1" type="primary">rsmJ</name>
    <name type="ordered locus">ASA_4298</name>
</gene>
<feature type="chain" id="PRO_0000292624" description="Ribosomal RNA small subunit methyltransferase J">
    <location>
        <begin position="1"/>
        <end position="249"/>
    </location>
</feature>
<feature type="binding site" evidence="1">
    <location>
        <begin position="97"/>
        <end position="98"/>
    </location>
    <ligand>
        <name>S-adenosyl-L-methionine</name>
        <dbReference type="ChEBI" id="CHEBI:59789"/>
    </ligand>
</feature>
<feature type="binding site" evidence="1">
    <location>
        <begin position="113"/>
        <end position="114"/>
    </location>
    <ligand>
        <name>S-adenosyl-L-methionine</name>
        <dbReference type="ChEBI" id="CHEBI:59789"/>
    </ligand>
</feature>
<feature type="binding site" evidence="1">
    <location>
        <position position="167"/>
    </location>
    <ligand>
        <name>S-adenosyl-L-methionine</name>
        <dbReference type="ChEBI" id="CHEBI:59789"/>
    </ligand>
</feature>
<reference key="1">
    <citation type="journal article" date="2008" name="BMC Genomics">
        <title>The genome of Aeromonas salmonicida subsp. salmonicida A449: insights into the evolution of a fish pathogen.</title>
        <authorList>
            <person name="Reith M.E."/>
            <person name="Singh R.K."/>
            <person name="Curtis B."/>
            <person name="Boyd J.M."/>
            <person name="Bouevitch A."/>
            <person name="Kimball J."/>
            <person name="Munholland J."/>
            <person name="Murphy C."/>
            <person name="Sarty D."/>
            <person name="Williams J."/>
            <person name="Nash J.H."/>
            <person name="Johnson S.C."/>
            <person name="Brown L.L."/>
        </authorList>
    </citation>
    <scope>NUCLEOTIDE SEQUENCE [LARGE SCALE GENOMIC DNA]</scope>
    <source>
        <strain>A449</strain>
    </source>
</reference>
<dbReference type="EC" id="2.1.1.242" evidence="1"/>
<dbReference type="EMBL" id="CP000644">
    <property type="protein sequence ID" value="ABO92222.1"/>
    <property type="molecule type" value="Genomic_DNA"/>
</dbReference>
<dbReference type="RefSeq" id="WP_005320678.1">
    <property type="nucleotide sequence ID" value="NC_009348.1"/>
</dbReference>
<dbReference type="SMR" id="A4STK0"/>
<dbReference type="STRING" id="29491.GCA_000820065_02799"/>
<dbReference type="KEGG" id="asa:ASA_4298"/>
<dbReference type="PATRIC" id="fig|382245.13.peg.4263"/>
<dbReference type="eggNOG" id="COG0742">
    <property type="taxonomic scope" value="Bacteria"/>
</dbReference>
<dbReference type="HOGENOM" id="CLU_076324_0_1_6"/>
<dbReference type="Proteomes" id="UP000000225">
    <property type="component" value="Chromosome"/>
</dbReference>
<dbReference type="GO" id="GO:0005737">
    <property type="term" value="C:cytoplasm"/>
    <property type="evidence" value="ECO:0007669"/>
    <property type="project" value="UniProtKB-SubCell"/>
</dbReference>
<dbReference type="GO" id="GO:0008990">
    <property type="term" value="F:rRNA (guanine-N2-)-methyltransferase activity"/>
    <property type="evidence" value="ECO:0007669"/>
    <property type="project" value="UniProtKB-UniRule"/>
</dbReference>
<dbReference type="CDD" id="cd02440">
    <property type="entry name" value="AdoMet_MTases"/>
    <property type="match status" value="1"/>
</dbReference>
<dbReference type="Gene3D" id="3.40.50.150">
    <property type="entry name" value="Vaccinia Virus protein VP39"/>
    <property type="match status" value="1"/>
</dbReference>
<dbReference type="Gene3D" id="3.40.1630.10">
    <property type="entry name" value="YhiQ-like domain"/>
    <property type="match status" value="1"/>
</dbReference>
<dbReference type="HAMAP" id="MF_01523">
    <property type="entry name" value="16SrRNA_methyltr_J"/>
    <property type="match status" value="1"/>
</dbReference>
<dbReference type="InterPro" id="IPR007536">
    <property type="entry name" value="16SrRNA_methylTrfase_J"/>
</dbReference>
<dbReference type="InterPro" id="IPR029063">
    <property type="entry name" value="SAM-dependent_MTases_sf"/>
</dbReference>
<dbReference type="PANTHER" id="PTHR36112">
    <property type="entry name" value="RIBOSOMAL RNA SMALL SUBUNIT METHYLTRANSFERASE J"/>
    <property type="match status" value="1"/>
</dbReference>
<dbReference type="PANTHER" id="PTHR36112:SF1">
    <property type="entry name" value="RIBOSOMAL RNA SMALL SUBUNIT METHYLTRANSFERASE J"/>
    <property type="match status" value="1"/>
</dbReference>
<dbReference type="Pfam" id="PF04445">
    <property type="entry name" value="SAM_MT"/>
    <property type="match status" value="1"/>
</dbReference>
<dbReference type="SUPFAM" id="SSF53335">
    <property type="entry name" value="S-adenosyl-L-methionine-dependent methyltransferases"/>
    <property type="match status" value="1"/>
</dbReference>
<comment type="function">
    <text evidence="1">Specifically methylates the guanosine in position 1516 of 16S rRNA.</text>
</comment>
<comment type="catalytic activity">
    <reaction evidence="1">
        <text>guanosine(1516) in 16S rRNA + S-adenosyl-L-methionine = N(2)-methylguanosine(1516) in 16S rRNA + S-adenosyl-L-homocysteine + H(+)</text>
        <dbReference type="Rhea" id="RHEA:43220"/>
        <dbReference type="Rhea" id="RHEA-COMP:10412"/>
        <dbReference type="Rhea" id="RHEA-COMP:10413"/>
        <dbReference type="ChEBI" id="CHEBI:15378"/>
        <dbReference type="ChEBI" id="CHEBI:57856"/>
        <dbReference type="ChEBI" id="CHEBI:59789"/>
        <dbReference type="ChEBI" id="CHEBI:74269"/>
        <dbReference type="ChEBI" id="CHEBI:74481"/>
        <dbReference type="EC" id="2.1.1.242"/>
    </reaction>
</comment>
<comment type="subcellular location">
    <subcellularLocation>
        <location evidence="1">Cytoplasm</location>
    </subcellularLocation>
</comment>
<comment type="similarity">
    <text evidence="1">Belongs to the methyltransferase superfamily. RsmJ family.</text>
</comment>
<name>RSMJ_AERS4</name>